<reference key="1">
    <citation type="journal article" date="2007" name="Nat. Biotechnol.">
        <title>Complete genome sequence of the erythromycin-producing bacterium Saccharopolyspora erythraea NRRL23338.</title>
        <authorList>
            <person name="Oliynyk M."/>
            <person name="Samborskyy M."/>
            <person name="Lester J.B."/>
            <person name="Mironenko T."/>
            <person name="Scott N."/>
            <person name="Dickens S."/>
            <person name="Haydock S.F."/>
            <person name="Leadlay P.F."/>
        </authorList>
    </citation>
    <scope>NUCLEOTIDE SEQUENCE [LARGE SCALE GENOMIC DNA]</scope>
    <source>
        <strain>ATCC 11635 / DSM 40517 / JCM 4748 / NBRC 13426 / NCIMB 8594 / NRRL 2338</strain>
    </source>
</reference>
<comment type="function">
    <text evidence="2">One of the essential components for the initiation of protein synthesis. Protects formylmethionyl-tRNA from spontaneous hydrolysis and promotes its binding to the 30S ribosomal subunits. Also involved in the hydrolysis of GTP during the formation of the 70S ribosomal complex.</text>
</comment>
<comment type="subcellular location">
    <subcellularLocation>
        <location evidence="2">Cytoplasm</location>
    </subcellularLocation>
</comment>
<comment type="similarity">
    <text evidence="2">Belongs to the TRAFAC class translation factor GTPase superfamily. Classic translation factor GTPase family. IF-2 subfamily.</text>
</comment>
<accession>A4FM34</accession>
<dbReference type="EMBL" id="AM420293">
    <property type="protein sequence ID" value="CAM05109.1"/>
    <property type="molecule type" value="Genomic_DNA"/>
</dbReference>
<dbReference type="RefSeq" id="WP_011874889.1">
    <property type="nucleotide sequence ID" value="NC_009142.1"/>
</dbReference>
<dbReference type="SMR" id="A4FM34"/>
<dbReference type="STRING" id="405948.SACE_5926"/>
<dbReference type="KEGG" id="sen:SACE_5926"/>
<dbReference type="eggNOG" id="COG0532">
    <property type="taxonomic scope" value="Bacteria"/>
</dbReference>
<dbReference type="HOGENOM" id="CLU_006301_9_4_11"/>
<dbReference type="Proteomes" id="UP000006728">
    <property type="component" value="Chromosome"/>
</dbReference>
<dbReference type="GO" id="GO:0005829">
    <property type="term" value="C:cytosol"/>
    <property type="evidence" value="ECO:0007669"/>
    <property type="project" value="TreeGrafter"/>
</dbReference>
<dbReference type="GO" id="GO:0005525">
    <property type="term" value="F:GTP binding"/>
    <property type="evidence" value="ECO:0007669"/>
    <property type="project" value="UniProtKB-KW"/>
</dbReference>
<dbReference type="GO" id="GO:0003924">
    <property type="term" value="F:GTPase activity"/>
    <property type="evidence" value="ECO:0007669"/>
    <property type="project" value="UniProtKB-UniRule"/>
</dbReference>
<dbReference type="GO" id="GO:0003743">
    <property type="term" value="F:translation initiation factor activity"/>
    <property type="evidence" value="ECO:0007669"/>
    <property type="project" value="UniProtKB-UniRule"/>
</dbReference>
<dbReference type="CDD" id="cd01887">
    <property type="entry name" value="IF2_eIF5B"/>
    <property type="match status" value="1"/>
</dbReference>
<dbReference type="CDD" id="cd03702">
    <property type="entry name" value="IF2_mtIF2_II"/>
    <property type="match status" value="1"/>
</dbReference>
<dbReference type="CDD" id="cd03692">
    <property type="entry name" value="mtIF2_IVc"/>
    <property type="match status" value="1"/>
</dbReference>
<dbReference type="FunFam" id="2.40.30.10:FF:000007">
    <property type="entry name" value="Translation initiation factor IF-2"/>
    <property type="match status" value="1"/>
</dbReference>
<dbReference type="FunFam" id="2.40.30.10:FF:000008">
    <property type="entry name" value="Translation initiation factor IF-2"/>
    <property type="match status" value="1"/>
</dbReference>
<dbReference type="FunFam" id="3.40.50.10050:FF:000001">
    <property type="entry name" value="Translation initiation factor IF-2"/>
    <property type="match status" value="1"/>
</dbReference>
<dbReference type="FunFam" id="3.40.50.300:FF:000019">
    <property type="entry name" value="Translation initiation factor IF-2"/>
    <property type="match status" value="1"/>
</dbReference>
<dbReference type="Gene3D" id="1.10.10.2480">
    <property type="match status" value="1"/>
</dbReference>
<dbReference type="Gene3D" id="3.40.50.300">
    <property type="entry name" value="P-loop containing nucleotide triphosphate hydrolases"/>
    <property type="match status" value="1"/>
</dbReference>
<dbReference type="Gene3D" id="2.40.30.10">
    <property type="entry name" value="Translation factors"/>
    <property type="match status" value="2"/>
</dbReference>
<dbReference type="Gene3D" id="3.40.50.10050">
    <property type="entry name" value="Translation initiation factor IF- 2, domain 3"/>
    <property type="match status" value="1"/>
</dbReference>
<dbReference type="HAMAP" id="MF_00100_B">
    <property type="entry name" value="IF_2_B"/>
    <property type="match status" value="1"/>
</dbReference>
<dbReference type="InterPro" id="IPR053905">
    <property type="entry name" value="EF-G-like_DII"/>
</dbReference>
<dbReference type="InterPro" id="IPR044145">
    <property type="entry name" value="IF2_II"/>
</dbReference>
<dbReference type="InterPro" id="IPR006847">
    <property type="entry name" value="IF2_N"/>
</dbReference>
<dbReference type="InterPro" id="IPR027417">
    <property type="entry name" value="P-loop_NTPase"/>
</dbReference>
<dbReference type="InterPro" id="IPR005225">
    <property type="entry name" value="Small_GTP-bd"/>
</dbReference>
<dbReference type="InterPro" id="IPR000795">
    <property type="entry name" value="T_Tr_GTP-bd_dom"/>
</dbReference>
<dbReference type="InterPro" id="IPR000178">
    <property type="entry name" value="TF_IF2_bacterial-like"/>
</dbReference>
<dbReference type="InterPro" id="IPR015760">
    <property type="entry name" value="TIF_IF2"/>
</dbReference>
<dbReference type="InterPro" id="IPR023115">
    <property type="entry name" value="TIF_IF2_dom3"/>
</dbReference>
<dbReference type="InterPro" id="IPR036925">
    <property type="entry name" value="TIF_IF2_dom3_sf"/>
</dbReference>
<dbReference type="InterPro" id="IPR009000">
    <property type="entry name" value="Transl_B-barrel_sf"/>
</dbReference>
<dbReference type="NCBIfam" id="TIGR00487">
    <property type="entry name" value="IF-2"/>
    <property type="match status" value="1"/>
</dbReference>
<dbReference type="NCBIfam" id="TIGR00231">
    <property type="entry name" value="small_GTP"/>
    <property type="match status" value="1"/>
</dbReference>
<dbReference type="PANTHER" id="PTHR43381:SF5">
    <property type="entry name" value="TR-TYPE G DOMAIN-CONTAINING PROTEIN"/>
    <property type="match status" value="1"/>
</dbReference>
<dbReference type="PANTHER" id="PTHR43381">
    <property type="entry name" value="TRANSLATION INITIATION FACTOR IF-2-RELATED"/>
    <property type="match status" value="1"/>
</dbReference>
<dbReference type="Pfam" id="PF22042">
    <property type="entry name" value="EF-G_D2"/>
    <property type="match status" value="1"/>
</dbReference>
<dbReference type="Pfam" id="PF00009">
    <property type="entry name" value="GTP_EFTU"/>
    <property type="match status" value="1"/>
</dbReference>
<dbReference type="Pfam" id="PF11987">
    <property type="entry name" value="IF-2"/>
    <property type="match status" value="1"/>
</dbReference>
<dbReference type="Pfam" id="PF04760">
    <property type="entry name" value="IF2_N"/>
    <property type="match status" value="2"/>
</dbReference>
<dbReference type="PRINTS" id="PR00315">
    <property type="entry name" value="ELONGATNFCT"/>
</dbReference>
<dbReference type="SUPFAM" id="SSF52156">
    <property type="entry name" value="Initiation factor IF2/eIF5b, domain 3"/>
    <property type="match status" value="1"/>
</dbReference>
<dbReference type="SUPFAM" id="SSF52540">
    <property type="entry name" value="P-loop containing nucleoside triphosphate hydrolases"/>
    <property type="match status" value="1"/>
</dbReference>
<dbReference type="SUPFAM" id="SSF50447">
    <property type="entry name" value="Translation proteins"/>
    <property type="match status" value="2"/>
</dbReference>
<dbReference type="PROSITE" id="PS51722">
    <property type="entry name" value="G_TR_2"/>
    <property type="match status" value="1"/>
</dbReference>
<dbReference type="PROSITE" id="PS01176">
    <property type="entry name" value="IF2"/>
    <property type="match status" value="1"/>
</dbReference>
<name>IF2_SACEN</name>
<organism>
    <name type="scientific">Saccharopolyspora erythraea (strain ATCC 11635 / DSM 40517 / JCM 4748 / NBRC 13426 / NCIMB 8594 / NRRL 2338)</name>
    <dbReference type="NCBI Taxonomy" id="405948"/>
    <lineage>
        <taxon>Bacteria</taxon>
        <taxon>Bacillati</taxon>
        <taxon>Actinomycetota</taxon>
        <taxon>Actinomycetes</taxon>
        <taxon>Pseudonocardiales</taxon>
        <taxon>Pseudonocardiaceae</taxon>
        <taxon>Saccharopolyspora</taxon>
    </lineage>
</organism>
<keyword id="KW-0963">Cytoplasm</keyword>
<keyword id="KW-0342">GTP-binding</keyword>
<keyword id="KW-0396">Initiation factor</keyword>
<keyword id="KW-0547">Nucleotide-binding</keyword>
<keyword id="KW-0648">Protein biosynthesis</keyword>
<keyword id="KW-1185">Reference proteome</keyword>
<sequence>MAGKARVHELAKELGVTSKEVLNKLAEQGEYVKSASSTVEAPVARRLRDAFPKSGGKKGGGDSNGRAGGAKPAPPRPPESSGRTEAQAPKPGPKPGPRTETPSGERPKPGPKPGPKPGPKAPAPETKPFEEAPAPAAKADAPAQPRSEQPRSEQPRSEQPRSEQPRSERSGPKPGGPKPGPKPGPKPGPRGGGDADAGVVPPKPQSPKPGPRSPRVGNNPFGVGSGAPAQRPPRPGPGGGQRQGGQGPGRGGPQGGRPDRQGGGGQGAGTAPAGGDRAPRGEGGGGGNRPNPGMMPPRPNPGMMPSRPARSGGGPGGGRGGGRGGPGGGGGGRPGGGGGGGRPGGGGGGFRGGGGPGAGAGTGAPAGGGFRGRPGGGGRPGGPGGRGGAAGAFGRPGGPARRGRKSKRQKRQEYMDNMQAPSVGGVRLPRGNGESVRLRRGASLTDFAEKINANPASLVQAMFHLGEMVTATQSVSDEILELLGSEMNYKVEMVSPEDEDRELLESFDISFGDPGSSDEELMSRPPVVTVMGHVDHGKTRLLDTIRKANVQAGEAGGITQHIGAYQVITELEGNERPITFIDTPGHEAFTAMRARGAKSTDIAVLVVAADDGVMPQTVEALNHAQAAGVPIVVAVNKIDVEGANPAKVRQQLTEYNLVAEEYGGETMFVDISARQGTNIESLLEAILLTADATLDLRANPSMEAQGVAIEAHLDRGRGPVATVLVQRGTLRVGDSVVAGNAFGRVRRMINEHDEDVTEALPSRPVQVIGFTSVPGAGDTFLVVDEDRVARQIADRRGARIREAQNAAKRKRVSLEDLDKVLKETNQLNLIIKGDNSGTVEALEESLTKIEVGEEVELRVIHRGVGGINESDINLATAENTIVLGFNVRAEGKAAEVANREGVEIRYYSVIYRAIEDIEQALKGMLKPEYEEVELGRAEVREVFKSSKVGTIAGCMVTDGIMRRNAKARLLRDNVVISENLTVTSLKRFKDDATEVRDGFECGLTLSYSDIKVDDIIETYEMREKPRA</sequence>
<protein>
    <recommendedName>
        <fullName evidence="2">Translation initiation factor IF-2</fullName>
    </recommendedName>
</protein>
<feature type="chain" id="PRO_0000335508" description="Translation initiation factor IF-2">
    <location>
        <begin position="1"/>
        <end position="1027"/>
    </location>
</feature>
<feature type="domain" description="tr-type G">
    <location>
        <begin position="523"/>
        <end position="695"/>
    </location>
</feature>
<feature type="region of interest" description="Disordered" evidence="3">
    <location>
        <begin position="31"/>
        <end position="433"/>
    </location>
</feature>
<feature type="region of interest" description="G1" evidence="1">
    <location>
        <begin position="532"/>
        <end position="539"/>
    </location>
</feature>
<feature type="region of interest" description="G2" evidence="1">
    <location>
        <begin position="557"/>
        <end position="561"/>
    </location>
</feature>
<feature type="region of interest" description="G3" evidence="1">
    <location>
        <begin position="582"/>
        <end position="585"/>
    </location>
</feature>
<feature type="region of interest" description="G4" evidence="1">
    <location>
        <begin position="636"/>
        <end position="639"/>
    </location>
</feature>
<feature type="region of interest" description="G5" evidence="1">
    <location>
        <begin position="672"/>
        <end position="674"/>
    </location>
</feature>
<feature type="compositionally biased region" description="Gly residues" evidence="3">
    <location>
        <begin position="57"/>
        <end position="68"/>
    </location>
</feature>
<feature type="compositionally biased region" description="Pro residues" evidence="3">
    <location>
        <begin position="110"/>
        <end position="122"/>
    </location>
</feature>
<feature type="compositionally biased region" description="Low complexity" evidence="3">
    <location>
        <begin position="123"/>
        <end position="145"/>
    </location>
</feature>
<feature type="compositionally biased region" description="Basic and acidic residues" evidence="3">
    <location>
        <begin position="148"/>
        <end position="171"/>
    </location>
</feature>
<feature type="compositionally biased region" description="Pro residues" evidence="3">
    <location>
        <begin position="174"/>
        <end position="188"/>
    </location>
</feature>
<feature type="compositionally biased region" description="Pro residues" evidence="3">
    <location>
        <begin position="201"/>
        <end position="212"/>
    </location>
</feature>
<feature type="compositionally biased region" description="Gly residues" evidence="3">
    <location>
        <begin position="237"/>
        <end position="268"/>
    </location>
</feature>
<feature type="compositionally biased region" description="Pro residues" evidence="3">
    <location>
        <begin position="293"/>
        <end position="302"/>
    </location>
</feature>
<feature type="compositionally biased region" description="Gly residues" evidence="3">
    <location>
        <begin position="311"/>
        <end position="397"/>
    </location>
</feature>
<feature type="compositionally biased region" description="Basic residues" evidence="3">
    <location>
        <begin position="401"/>
        <end position="410"/>
    </location>
</feature>
<feature type="binding site" evidence="2">
    <location>
        <begin position="532"/>
        <end position="539"/>
    </location>
    <ligand>
        <name>GTP</name>
        <dbReference type="ChEBI" id="CHEBI:37565"/>
    </ligand>
</feature>
<feature type="binding site" evidence="2">
    <location>
        <begin position="582"/>
        <end position="586"/>
    </location>
    <ligand>
        <name>GTP</name>
        <dbReference type="ChEBI" id="CHEBI:37565"/>
    </ligand>
</feature>
<feature type="binding site" evidence="2">
    <location>
        <begin position="636"/>
        <end position="639"/>
    </location>
    <ligand>
        <name>GTP</name>
        <dbReference type="ChEBI" id="CHEBI:37565"/>
    </ligand>
</feature>
<evidence type="ECO:0000250" key="1"/>
<evidence type="ECO:0000255" key="2">
    <source>
        <dbReference type="HAMAP-Rule" id="MF_00100"/>
    </source>
</evidence>
<evidence type="ECO:0000256" key="3">
    <source>
        <dbReference type="SAM" id="MobiDB-lite"/>
    </source>
</evidence>
<gene>
    <name evidence="2" type="primary">infB</name>
    <name type="ordered locus">SACE_5926</name>
</gene>
<proteinExistence type="inferred from homology"/>